<reference key="1">
    <citation type="submission" date="2008-08" db="EMBL/GenBank/DDBJ databases">
        <title>Complete sequence of Vibrio fischeri strain MJ11.</title>
        <authorList>
            <person name="Mandel M.J."/>
            <person name="Stabb E.V."/>
            <person name="Ruby E.G."/>
            <person name="Ferriera S."/>
            <person name="Johnson J."/>
            <person name="Kravitz S."/>
            <person name="Beeson K."/>
            <person name="Sutton G."/>
            <person name="Rogers Y.-H."/>
            <person name="Friedman R."/>
            <person name="Frazier M."/>
            <person name="Venter J.C."/>
        </authorList>
    </citation>
    <scope>NUCLEOTIDE SEQUENCE [LARGE SCALE GENOMIC DNA]</scope>
    <source>
        <strain>MJ11</strain>
    </source>
</reference>
<protein>
    <recommendedName>
        <fullName evidence="1">Small ribosomal subunit protein bS16</fullName>
    </recommendedName>
    <alternativeName>
        <fullName evidence="2">30S ribosomal protein S16</fullName>
    </alternativeName>
</protein>
<dbReference type="EMBL" id="CP001139">
    <property type="protein sequence ID" value="ACH65619.1"/>
    <property type="molecule type" value="Genomic_DNA"/>
</dbReference>
<dbReference type="RefSeq" id="WP_005417799.1">
    <property type="nucleotide sequence ID" value="NC_011184.1"/>
</dbReference>
<dbReference type="SMR" id="B5FAE5"/>
<dbReference type="GeneID" id="54163198"/>
<dbReference type="KEGG" id="vfm:VFMJ11_0561"/>
<dbReference type="HOGENOM" id="CLU_100590_5_1_6"/>
<dbReference type="Proteomes" id="UP000001857">
    <property type="component" value="Chromosome I"/>
</dbReference>
<dbReference type="GO" id="GO:0005737">
    <property type="term" value="C:cytoplasm"/>
    <property type="evidence" value="ECO:0007669"/>
    <property type="project" value="UniProtKB-ARBA"/>
</dbReference>
<dbReference type="GO" id="GO:0015935">
    <property type="term" value="C:small ribosomal subunit"/>
    <property type="evidence" value="ECO:0007669"/>
    <property type="project" value="TreeGrafter"/>
</dbReference>
<dbReference type="GO" id="GO:0003735">
    <property type="term" value="F:structural constituent of ribosome"/>
    <property type="evidence" value="ECO:0007669"/>
    <property type="project" value="InterPro"/>
</dbReference>
<dbReference type="GO" id="GO:0006412">
    <property type="term" value="P:translation"/>
    <property type="evidence" value="ECO:0007669"/>
    <property type="project" value="UniProtKB-UniRule"/>
</dbReference>
<dbReference type="FunFam" id="3.30.1320.10:FF:000001">
    <property type="entry name" value="30S ribosomal protein S16"/>
    <property type="match status" value="1"/>
</dbReference>
<dbReference type="Gene3D" id="3.30.1320.10">
    <property type="match status" value="1"/>
</dbReference>
<dbReference type="HAMAP" id="MF_00385">
    <property type="entry name" value="Ribosomal_bS16"/>
    <property type="match status" value="1"/>
</dbReference>
<dbReference type="InterPro" id="IPR000307">
    <property type="entry name" value="Ribosomal_bS16"/>
</dbReference>
<dbReference type="InterPro" id="IPR020592">
    <property type="entry name" value="Ribosomal_bS16_CS"/>
</dbReference>
<dbReference type="InterPro" id="IPR023803">
    <property type="entry name" value="Ribosomal_bS16_dom_sf"/>
</dbReference>
<dbReference type="NCBIfam" id="TIGR00002">
    <property type="entry name" value="S16"/>
    <property type="match status" value="1"/>
</dbReference>
<dbReference type="PANTHER" id="PTHR12919">
    <property type="entry name" value="30S RIBOSOMAL PROTEIN S16"/>
    <property type="match status" value="1"/>
</dbReference>
<dbReference type="PANTHER" id="PTHR12919:SF20">
    <property type="entry name" value="SMALL RIBOSOMAL SUBUNIT PROTEIN BS16M"/>
    <property type="match status" value="1"/>
</dbReference>
<dbReference type="Pfam" id="PF00886">
    <property type="entry name" value="Ribosomal_S16"/>
    <property type="match status" value="1"/>
</dbReference>
<dbReference type="SUPFAM" id="SSF54565">
    <property type="entry name" value="Ribosomal protein S16"/>
    <property type="match status" value="1"/>
</dbReference>
<dbReference type="PROSITE" id="PS00732">
    <property type="entry name" value="RIBOSOMAL_S16"/>
    <property type="match status" value="1"/>
</dbReference>
<evidence type="ECO:0000255" key="1">
    <source>
        <dbReference type="HAMAP-Rule" id="MF_00385"/>
    </source>
</evidence>
<evidence type="ECO:0000305" key="2"/>
<organism>
    <name type="scientific">Aliivibrio fischeri (strain MJ11)</name>
    <name type="common">Vibrio fischeri</name>
    <dbReference type="NCBI Taxonomy" id="388396"/>
    <lineage>
        <taxon>Bacteria</taxon>
        <taxon>Pseudomonadati</taxon>
        <taxon>Pseudomonadota</taxon>
        <taxon>Gammaproteobacteria</taxon>
        <taxon>Vibrionales</taxon>
        <taxon>Vibrionaceae</taxon>
        <taxon>Aliivibrio</taxon>
    </lineage>
</organism>
<comment type="similarity">
    <text evidence="1">Belongs to the bacterial ribosomal protein bS16 family.</text>
</comment>
<sequence>MVTIRLARHGAKKRPFYQIVVADSRFKATGRYIEKVGFFNPTAQGQEEGLRLDLDRVGHWVEQGAGLSDRVAKLVKDAKKAA</sequence>
<proteinExistence type="inferred from homology"/>
<accession>B5FAE5</accession>
<keyword id="KW-0687">Ribonucleoprotein</keyword>
<keyword id="KW-0689">Ribosomal protein</keyword>
<gene>
    <name evidence="1" type="primary">rpsP</name>
    <name type="ordered locus">VFMJ11_0561</name>
</gene>
<name>RS16_ALIFM</name>
<feature type="chain" id="PRO_1000122596" description="Small ribosomal subunit protein bS16">
    <location>
        <begin position="1"/>
        <end position="82"/>
    </location>
</feature>